<organism>
    <name type="scientific">Homo sapiens</name>
    <name type="common">Human</name>
    <dbReference type="NCBI Taxonomy" id="9606"/>
    <lineage>
        <taxon>Eukaryota</taxon>
        <taxon>Metazoa</taxon>
        <taxon>Chordata</taxon>
        <taxon>Craniata</taxon>
        <taxon>Vertebrata</taxon>
        <taxon>Euteleostomi</taxon>
        <taxon>Mammalia</taxon>
        <taxon>Eutheria</taxon>
        <taxon>Euarchontoglires</taxon>
        <taxon>Primates</taxon>
        <taxon>Haplorrhini</taxon>
        <taxon>Catarrhini</taxon>
        <taxon>Hominidae</taxon>
        <taxon>Homo</taxon>
    </lineage>
</organism>
<proteinExistence type="evidence at protein level"/>
<dbReference type="EMBL" id="AF510428">
    <property type="protein sequence ID" value="AAP30864.1"/>
    <property type="molecule type" value="mRNA"/>
</dbReference>
<dbReference type="EMBL" id="AL136902">
    <property type="protein sequence ID" value="CAB66836.1"/>
    <property type="molecule type" value="mRNA"/>
</dbReference>
<dbReference type="EMBL" id="AK128152">
    <property type="protein sequence ID" value="BAC87300.1"/>
    <property type="molecule type" value="mRNA"/>
</dbReference>
<dbReference type="EMBL" id="AL138776">
    <property type="status" value="NOT_ANNOTATED_CDS"/>
    <property type="molecule type" value="Genomic_DNA"/>
</dbReference>
<dbReference type="EMBL" id="AL139344">
    <property type="status" value="NOT_ANNOTATED_CDS"/>
    <property type="molecule type" value="Genomic_DNA"/>
</dbReference>
<dbReference type="EMBL" id="CH471067">
    <property type="protein sequence ID" value="EAW91125.1"/>
    <property type="molecule type" value="Genomic_DNA"/>
</dbReference>
<dbReference type="EMBL" id="BC121032">
    <property type="status" value="NOT_ANNOTATED_CDS"/>
    <property type="molecule type" value="mRNA"/>
</dbReference>
<dbReference type="EMBL" id="BC121033">
    <property type="status" value="NOT_ANNOTATED_CDS"/>
    <property type="molecule type" value="mRNA"/>
</dbReference>
<dbReference type="EMBL" id="BC142944">
    <property type="protein sequence ID" value="AAI42945.1"/>
    <property type="molecule type" value="mRNA"/>
</dbReference>
<dbReference type="CCDS" id="CCDS58049.1">
    <molecule id="A5PLK6-1"/>
</dbReference>
<dbReference type="RefSeq" id="NP_001131141.1">
    <molecule id="A5PLK6-1"/>
    <property type="nucleotide sequence ID" value="NM_001137669.2"/>
</dbReference>
<dbReference type="RefSeq" id="XP_016856684.1">
    <property type="nucleotide sequence ID" value="XM_017001195.1"/>
</dbReference>
<dbReference type="RefSeq" id="XP_016856685.1">
    <molecule id="A5PLK6-2"/>
    <property type="nucleotide sequence ID" value="XM_017001196.1"/>
</dbReference>
<dbReference type="RefSeq" id="XP_047275596.1">
    <molecule id="A5PLK6-2"/>
    <property type="nucleotide sequence ID" value="XM_047419640.1"/>
</dbReference>
<dbReference type="RefSeq" id="XP_054192358.1">
    <molecule id="A5PLK6-2"/>
    <property type="nucleotide sequence ID" value="XM_054336383.1"/>
</dbReference>
<dbReference type="RefSeq" id="XP_054192359.1">
    <molecule id="A5PLK6-2"/>
    <property type="nucleotide sequence ID" value="XM_054336384.1"/>
</dbReference>
<dbReference type="BioGRID" id="131681">
    <property type="interactions" value="7"/>
</dbReference>
<dbReference type="FunCoup" id="A5PLK6">
    <property type="interactions" value="118"/>
</dbReference>
<dbReference type="IntAct" id="A5PLK6">
    <property type="interactions" value="3"/>
</dbReference>
<dbReference type="STRING" id="9606.ENSP00000457748"/>
<dbReference type="iPTMnet" id="A5PLK6"/>
<dbReference type="PhosphoSitePlus" id="A5PLK6"/>
<dbReference type="BioMuta" id="RGSL1"/>
<dbReference type="jPOST" id="A5PLK6"/>
<dbReference type="MassIVE" id="A5PLK6"/>
<dbReference type="PaxDb" id="9606-ENSP00000457748"/>
<dbReference type="PeptideAtlas" id="A5PLK6"/>
<dbReference type="ProteomicsDB" id="731">
    <molecule id="A5PLK6-1"/>
</dbReference>
<dbReference type="ProteomicsDB" id="732">
    <molecule id="A5PLK6-2"/>
</dbReference>
<dbReference type="ProteomicsDB" id="733">
    <molecule id="A5PLK6-3"/>
</dbReference>
<dbReference type="ProteomicsDB" id="734">
    <molecule id="A5PLK6-4"/>
</dbReference>
<dbReference type="ProteomicsDB" id="735">
    <molecule id="A5PLK6-5"/>
</dbReference>
<dbReference type="ProteomicsDB" id="736">
    <molecule id="A5PLK6-6"/>
</dbReference>
<dbReference type="Antibodypedia" id="72237">
    <property type="antibodies" value="6 antibodies from 6 providers"/>
</dbReference>
<dbReference type="DNASU" id="353299"/>
<dbReference type="Ensembl" id="ENST00000294854.13">
    <molecule id="A5PLK6-1"/>
    <property type="protein sequence ID" value="ENSP00000457748.1"/>
    <property type="gene ID" value="ENSG00000121446.20"/>
</dbReference>
<dbReference type="GeneID" id="353299"/>
<dbReference type="KEGG" id="hsa:353299"/>
<dbReference type="MANE-Select" id="ENST00000294854.13">
    <property type="protein sequence ID" value="ENSP00000457748.1"/>
    <property type="RefSeq nucleotide sequence ID" value="NM_001137669.2"/>
    <property type="RefSeq protein sequence ID" value="NP_001131141.1"/>
</dbReference>
<dbReference type="UCSC" id="uc009wxw.5">
    <molecule id="A5PLK6-1"/>
    <property type="organism name" value="human"/>
</dbReference>
<dbReference type="AGR" id="HGNC:18636"/>
<dbReference type="CTD" id="353299"/>
<dbReference type="DisGeNET" id="353299"/>
<dbReference type="GeneCards" id="RGSL1"/>
<dbReference type="HGNC" id="HGNC:18636">
    <property type="gene designation" value="RGSL1"/>
</dbReference>
<dbReference type="HPA" id="ENSG00000121446">
    <property type="expression patterns" value="Tissue enriched (testis)"/>
</dbReference>
<dbReference type="MIM" id="611012">
    <property type="type" value="gene"/>
</dbReference>
<dbReference type="MIM" id="611013">
    <property type="type" value="gene"/>
</dbReference>
<dbReference type="neXtProt" id="NX_A5PLK6"/>
<dbReference type="OpenTargets" id="ENSG00000121446"/>
<dbReference type="PharmGKB" id="PA134870196"/>
<dbReference type="VEuPathDB" id="HostDB:ENSG00000121446"/>
<dbReference type="eggNOG" id="ENOG502QPIJ">
    <property type="taxonomic scope" value="Eukaryota"/>
</dbReference>
<dbReference type="GeneTree" id="ENSGT00660000095605"/>
<dbReference type="HOGENOM" id="CLU_295893_0_0_1"/>
<dbReference type="InParanoid" id="A5PLK6"/>
<dbReference type="OMA" id="MEKMDSM"/>
<dbReference type="OrthoDB" id="9644022at2759"/>
<dbReference type="PAN-GO" id="A5PLK6">
    <property type="GO annotations" value="0 GO annotations based on evolutionary models"/>
</dbReference>
<dbReference type="PhylomeDB" id="A5PLK6"/>
<dbReference type="TreeFam" id="TF336510"/>
<dbReference type="PathwayCommons" id="A5PLK6"/>
<dbReference type="Reactome" id="R-HSA-416476">
    <property type="pathway name" value="G alpha (q) signalling events"/>
</dbReference>
<dbReference type="Reactome" id="R-HSA-418594">
    <property type="pathway name" value="G alpha (i) signalling events"/>
</dbReference>
<dbReference type="Reactome" id="R-HSA-418597">
    <property type="pathway name" value="G alpha (z) signalling events"/>
</dbReference>
<dbReference type="SignaLink" id="A5PLK6"/>
<dbReference type="BioGRID-ORCS" id="353299">
    <property type="hits" value="10 hits in 1141 CRISPR screens"/>
</dbReference>
<dbReference type="ChiTaRS" id="RGSL1">
    <property type="organism name" value="human"/>
</dbReference>
<dbReference type="GenomeRNAi" id="353299"/>
<dbReference type="Pharos" id="A5PLK6">
    <property type="development level" value="Tbio"/>
</dbReference>
<dbReference type="PRO" id="PR:A5PLK6"/>
<dbReference type="Proteomes" id="UP000005640">
    <property type="component" value="Chromosome 1"/>
</dbReference>
<dbReference type="RNAct" id="A5PLK6">
    <property type="molecule type" value="protein"/>
</dbReference>
<dbReference type="Bgee" id="ENSG00000121446">
    <property type="expression patterns" value="Expressed in left testis and 74 other cell types or tissues"/>
</dbReference>
<dbReference type="ExpressionAtlas" id="A5PLK6">
    <property type="expression patterns" value="baseline and differential"/>
</dbReference>
<dbReference type="GO" id="GO:0016020">
    <property type="term" value="C:membrane"/>
    <property type="evidence" value="ECO:0007669"/>
    <property type="project" value="UniProtKB-SubCell"/>
</dbReference>
<dbReference type="CDD" id="cd08728">
    <property type="entry name" value="RGS-like_2"/>
    <property type="match status" value="1"/>
</dbReference>
<dbReference type="Gene3D" id="1.10.167.10">
    <property type="entry name" value="Regulator of G-protein Signalling 4, domain 2"/>
    <property type="match status" value="1"/>
</dbReference>
<dbReference type="InterPro" id="IPR016137">
    <property type="entry name" value="RGS"/>
</dbReference>
<dbReference type="InterPro" id="IPR053282">
    <property type="entry name" value="RGS_domain-containing"/>
</dbReference>
<dbReference type="InterPro" id="IPR036305">
    <property type="entry name" value="RGS_sf"/>
</dbReference>
<dbReference type="InterPro" id="IPR044926">
    <property type="entry name" value="RGS_subdomain_2"/>
</dbReference>
<dbReference type="PANTHER" id="PTHR47079">
    <property type="entry name" value="REGULATOR OF G-PROTEIN SIGNALING PROTEIN-LIKE"/>
    <property type="match status" value="1"/>
</dbReference>
<dbReference type="PANTHER" id="PTHR47079:SF1">
    <property type="entry name" value="REGULATOR OF G-PROTEIN SIGNALING PROTEIN-LIKE"/>
    <property type="match status" value="1"/>
</dbReference>
<dbReference type="Pfam" id="PF00615">
    <property type="entry name" value="RGS"/>
    <property type="match status" value="1"/>
</dbReference>
<dbReference type="SUPFAM" id="SSF48097">
    <property type="entry name" value="Regulator of G-protein signaling, RGS"/>
    <property type="match status" value="2"/>
</dbReference>
<name>RGSL_HUMAN</name>
<sequence>MSSAEIIGSTNLIILLEDEVFADFFNTFLSLPVFGQTPFYTVENSQWSLWPEIPCNLIAKYKGLLTWLEKCRLPFFCKTNLCFHYILCQEFISFIKSPEGGEELVDFWILAENILSIDEMDLEVRDYYLSLLLMLRATHLQEGSRVVTLCNMNIKSLLNLSIWHPNQSTTRREILSHMQKVALFKLQSYWLPNFYTHTKMTMAKEEACHGLMQEYETRLYSVCYTHIGGLPLNMSIKKCHHFQKRYSSRKAKRKMWQLVDPDSWSLEMDLKPDAIGMPLQETCPQEKVVIQMPSLKMASSKETRISSLEKDMHYAKISSMENKAKSHLHMEAPFETKVSTHLRTVIPIVNHSSKMTIQKAIKQSFSLGYIHLALCADACAGNPFRDHLKKLNLKVEIQLLDLWQDLQHFLSVLLNNKKNGNAIFRHLLGDRICELYLNEQIGPCLPLKSQTIQGLKELLPSGDVIPWIPKAQKEICKMLSPWYDEFLDEEDYWFLLFTTQNRFISSRQHKREFIGKEENILLYKRIQQSLELSQALADMKEMDYRQWRKIATEDLKQGGSLQVELTSPVFLTDITKMSFEELCYKNPKMAIQKISDDYKIYCEKAPKIDFKMEIIKETKTVSRSNRKMSLLKRTLVRKPSMRPRNLTEVLLNTQHLEFFREFLKERKAKIPLQFLTAVQKISIETNEKICKSLIENVIKTFFQGQLSPEEMLQCDAPIIKEIASMRHVTTSTLLTLQGHVMKSIEEKWFKDYQDLFPPHHQEVEVQSEVQISSRKPSKIVSTYLQESQKKGWMRMISFIRSFCKYRRFMLNPSKRQEFEDYLHQEMQNSKENFTTAHNTSGRSAPPSTNVRSADQENGEITLVKRRIFGHRIITVNFAINDLYFFSEMEKFNDLVSSAHMLQVNRAYNENDVILMRSKMNIIQKLFLNSDIPPKLRVNVPEFQKDAILAAITEGYLDRSVFHGAIMSVFPVVMYFWKRFCFWKATRSYLQYRGKKFKDRKSPPKSTDKYPFSSGGDNAILRFTLLRGIEWLQPQREAISSVQNSSSSKLTQPRLVVSAMQLHPVQGQKLSYIKKEK</sequence>
<evidence type="ECO:0000255" key="1"/>
<evidence type="ECO:0000256" key="2">
    <source>
        <dbReference type="SAM" id="MobiDB-lite"/>
    </source>
</evidence>
<evidence type="ECO:0000303" key="3">
    <source>
    </source>
</evidence>
<evidence type="ECO:0000303" key="4">
    <source>
    </source>
</evidence>
<evidence type="ECO:0000303" key="5">
    <source>
    </source>
</evidence>
<evidence type="ECO:0000303" key="6">
    <source ref="1"/>
</evidence>
<evidence type="ECO:0000305" key="7"/>
<protein>
    <recommendedName>
        <fullName>Regulator of G-protein signaling protein-like</fullName>
    </recommendedName>
</protein>
<comment type="subcellular location">
    <subcellularLocation>
        <location evidence="7">Membrane</location>
        <topology evidence="7">Single-pass membrane protein</topology>
    </subcellularLocation>
</comment>
<comment type="alternative products">
    <event type="alternative splicing"/>
    <isoform>
        <id>A5PLK6-1</id>
        <name>1</name>
        <sequence type="displayed"/>
    </isoform>
    <isoform>
        <id>A5PLK6-2</id>
        <name>2</name>
        <sequence type="described" ref="VSP_035348"/>
    </isoform>
    <isoform>
        <id>A5PLK6-3</id>
        <name>3</name>
        <sequence type="described" ref="VSP_035347"/>
    </isoform>
    <isoform>
        <id>A5PLK6-4</id>
        <name>4</name>
        <sequence type="described" ref="VSP_035347 VSP_035354"/>
    </isoform>
    <isoform>
        <id>A5PLK6-5</id>
        <name>5</name>
        <sequence type="described" ref="VSP_035348 VSP_035352 VSP_035353"/>
    </isoform>
    <isoform>
        <id>A5PLK6-6</id>
        <name>6</name>
        <sequence type="described" ref="VSP_035349 VSP_035350 VSP_035351"/>
    </isoform>
</comment>
<keyword id="KW-0025">Alternative splicing</keyword>
<keyword id="KW-0472">Membrane</keyword>
<keyword id="KW-1267">Proteomics identification</keyword>
<keyword id="KW-1185">Reference proteome</keyword>
<keyword id="KW-0812">Transmembrane</keyword>
<keyword id="KW-1133">Transmembrane helix</keyword>
<accession>A5PLK6</accession>
<accession>A2A2Z0</accession>
<accession>A6PVM2</accession>
<accession>A6PVM3</accession>
<accession>Q0VAJ4</accession>
<accession>Q0VAJ5</accession>
<accession>Q6ZRL0</accession>
<accession>Q86UV0</accession>
<accession>Q9H084</accession>
<reference key="1">
    <citation type="submission" date="2002-05" db="EMBL/GenBank/DDBJ databases">
        <title>Identification of 17 additional transcripts within the hereditary prostate cancer locus (HPC1) at 1q25.</title>
        <authorList>
            <person name="Silva A.P.M."/>
            <person name="Caballero O."/>
            <person name="de Souza S.J."/>
            <person name="Simpson A.J.G."/>
            <person name="Camargo A.A."/>
        </authorList>
    </citation>
    <scope>NUCLEOTIDE SEQUENCE [MRNA] (ISOFORM 3)</scope>
</reference>
<reference key="2">
    <citation type="journal article" date="2001" name="Genome Res.">
        <title>Towards a catalog of human genes and proteins: sequencing and analysis of 500 novel complete protein coding human cDNAs.</title>
        <authorList>
            <person name="Wiemann S."/>
            <person name="Weil B."/>
            <person name="Wellenreuther R."/>
            <person name="Gassenhuber J."/>
            <person name="Glassl S."/>
            <person name="Ansorge W."/>
            <person name="Boecher M."/>
            <person name="Bloecker H."/>
            <person name="Bauersachs S."/>
            <person name="Blum H."/>
            <person name="Lauber J."/>
            <person name="Duesterhoeft A."/>
            <person name="Beyer A."/>
            <person name="Koehrer K."/>
            <person name="Strack N."/>
            <person name="Mewes H.-W."/>
            <person name="Ottenwaelder B."/>
            <person name="Obermaier B."/>
            <person name="Tampe J."/>
            <person name="Heubner D."/>
            <person name="Wambutt R."/>
            <person name="Korn B."/>
            <person name="Klein M."/>
            <person name="Poustka A."/>
        </authorList>
    </citation>
    <scope>NUCLEOTIDE SEQUENCE [LARGE SCALE MRNA] (ISOFORM 6)</scope>
    <source>
        <tissue>Testis</tissue>
    </source>
</reference>
<reference key="3">
    <citation type="journal article" date="2004" name="Nat. Genet.">
        <title>Complete sequencing and characterization of 21,243 full-length human cDNAs.</title>
        <authorList>
            <person name="Ota T."/>
            <person name="Suzuki Y."/>
            <person name="Nishikawa T."/>
            <person name="Otsuki T."/>
            <person name="Sugiyama T."/>
            <person name="Irie R."/>
            <person name="Wakamatsu A."/>
            <person name="Hayashi K."/>
            <person name="Sato H."/>
            <person name="Nagai K."/>
            <person name="Kimura K."/>
            <person name="Makita H."/>
            <person name="Sekine M."/>
            <person name="Obayashi M."/>
            <person name="Nishi T."/>
            <person name="Shibahara T."/>
            <person name="Tanaka T."/>
            <person name="Ishii S."/>
            <person name="Yamamoto J."/>
            <person name="Saito K."/>
            <person name="Kawai Y."/>
            <person name="Isono Y."/>
            <person name="Nakamura Y."/>
            <person name="Nagahari K."/>
            <person name="Murakami K."/>
            <person name="Yasuda T."/>
            <person name="Iwayanagi T."/>
            <person name="Wagatsuma M."/>
            <person name="Shiratori A."/>
            <person name="Sudo H."/>
            <person name="Hosoiri T."/>
            <person name="Kaku Y."/>
            <person name="Kodaira H."/>
            <person name="Kondo H."/>
            <person name="Sugawara M."/>
            <person name="Takahashi M."/>
            <person name="Kanda K."/>
            <person name="Yokoi T."/>
            <person name="Furuya T."/>
            <person name="Kikkawa E."/>
            <person name="Omura Y."/>
            <person name="Abe K."/>
            <person name="Kamihara K."/>
            <person name="Katsuta N."/>
            <person name="Sato K."/>
            <person name="Tanikawa M."/>
            <person name="Yamazaki M."/>
            <person name="Ninomiya K."/>
            <person name="Ishibashi T."/>
            <person name="Yamashita H."/>
            <person name="Murakawa K."/>
            <person name="Fujimori K."/>
            <person name="Tanai H."/>
            <person name="Kimata M."/>
            <person name="Watanabe M."/>
            <person name="Hiraoka S."/>
            <person name="Chiba Y."/>
            <person name="Ishida S."/>
            <person name="Ono Y."/>
            <person name="Takiguchi S."/>
            <person name="Watanabe S."/>
            <person name="Yosida M."/>
            <person name="Hotuta T."/>
            <person name="Kusano J."/>
            <person name="Kanehori K."/>
            <person name="Takahashi-Fujii A."/>
            <person name="Hara H."/>
            <person name="Tanase T.-O."/>
            <person name="Nomura Y."/>
            <person name="Togiya S."/>
            <person name="Komai F."/>
            <person name="Hara R."/>
            <person name="Takeuchi K."/>
            <person name="Arita M."/>
            <person name="Imose N."/>
            <person name="Musashino K."/>
            <person name="Yuuki H."/>
            <person name="Oshima A."/>
            <person name="Sasaki N."/>
            <person name="Aotsuka S."/>
            <person name="Yoshikawa Y."/>
            <person name="Matsunawa H."/>
            <person name="Ichihara T."/>
            <person name="Shiohata N."/>
            <person name="Sano S."/>
            <person name="Moriya S."/>
            <person name="Momiyama H."/>
            <person name="Satoh N."/>
            <person name="Takami S."/>
            <person name="Terashima Y."/>
            <person name="Suzuki O."/>
            <person name="Nakagawa S."/>
            <person name="Senoh A."/>
            <person name="Mizoguchi H."/>
            <person name="Goto Y."/>
            <person name="Shimizu F."/>
            <person name="Wakebe H."/>
            <person name="Hishigaki H."/>
            <person name="Watanabe T."/>
            <person name="Sugiyama A."/>
            <person name="Takemoto M."/>
            <person name="Kawakami B."/>
            <person name="Yamazaki M."/>
            <person name="Watanabe K."/>
            <person name="Kumagai A."/>
            <person name="Itakura S."/>
            <person name="Fukuzumi Y."/>
            <person name="Fujimori Y."/>
            <person name="Komiyama M."/>
            <person name="Tashiro H."/>
            <person name="Tanigami A."/>
            <person name="Fujiwara T."/>
            <person name="Ono T."/>
            <person name="Yamada K."/>
            <person name="Fujii Y."/>
            <person name="Ozaki K."/>
            <person name="Hirao M."/>
            <person name="Ohmori Y."/>
            <person name="Kawabata A."/>
            <person name="Hikiji T."/>
            <person name="Kobatake N."/>
            <person name="Inagaki H."/>
            <person name="Ikema Y."/>
            <person name="Okamoto S."/>
            <person name="Okitani R."/>
            <person name="Kawakami T."/>
            <person name="Noguchi S."/>
            <person name="Itoh T."/>
            <person name="Shigeta K."/>
            <person name="Senba T."/>
            <person name="Matsumura K."/>
            <person name="Nakajima Y."/>
            <person name="Mizuno T."/>
            <person name="Morinaga M."/>
            <person name="Sasaki M."/>
            <person name="Togashi T."/>
            <person name="Oyama M."/>
            <person name="Hata H."/>
            <person name="Watanabe M."/>
            <person name="Komatsu T."/>
            <person name="Mizushima-Sugano J."/>
            <person name="Satoh T."/>
            <person name="Shirai Y."/>
            <person name="Takahashi Y."/>
            <person name="Nakagawa K."/>
            <person name="Okumura K."/>
            <person name="Nagase T."/>
            <person name="Nomura N."/>
            <person name="Kikuchi H."/>
            <person name="Masuho Y."/>
            <person name="Yamashita R."/>
            <person name="Nakai K."/>
            <person name="Yada T."/>
            <person name="Nakamura Y."/>
            <person name="Ohara O."/>
            <person name="Isogai T."/>
            <person name="Sugano S."/>
        </authorList>
    </citation>
    <scope>NUCLEOTIDE SEQUENCE [LARGE SCALE MRNA] (ISOFORM 4)</scope>
    <source>
        <tissue>Testis</tissue>
    </source>
</reference>
<reference key="4">
    <citation type="journal article" date="2006" name="Nature">
        <title>The DNA sequence and biological annotation of human chromosome 1.</title>
        <authorList>
            <person name="Gregory S.G."/>
            <person name="Barlow K.F."/>
            <person name="McLay K.E."/>
            <person name="Kaul R."/>
            <person name="Swarbreck D."/>
            <person name="Dunham A."/>
            <person name="Scott C.E."/>
            <person name="Howe K.L."/>
            <person name="Woodfine K."/>
            <person name="Spencer C.C.A."/>
            <person name="Jones M.C."/>
            <person name="Gillson C."/>
            <person name="Searle S."/>
            <person name="Zhou Y."/>
            <person name="Kokocinski F."/>
            <person name="McDonald L."/>
            <person name="Evans R."/>
            <person name="Phillips K."/>
            <person name="Atkinson A."/>
            <person name="Cooper R."/>
            <person name="Jones C."/>
            <person name="Hall R.E."/>
            <person name="Andrews T.D."/>
            <person name="Lloyd C."/>
            <person name="Ainscough R."/>
            <person name="Almeida J.P."/>
            <person name="Ambrose K.D."/>
            <person name="Anderson F."/>
            <person name="Andrew R.W."/>
            <person name="Ashwell R.I.S."/>
            <person name="Aubin K."/>
            <person name="Babbage A.K."/>
            <person name="Bagguley C.L."/>
            <person name="Bailey J."/>
            <person name="Beasley H."/>
            <person name="Bethel G."/>
            <person name="Bird C.P."/>
            <person name="Bray-Allen S."/>
            <person name="Brown J.Y."/>
            <person name="Brown A.J."/>
            <person name="Buckley D."/>
            <person name="Burton J."/>
            <person name="Bye J."/>
            <person name="Carder C."/>
            <person name="Chapman J.C."/>
            <person name="Clark S.Y."/>
            <person name="Clarke G."/>
            <person name="Clee C."/>
            <person name="Cobley V."/>
            <person name="Collier R.E."/>
            <person name="Corby N."/>
            <person name="Coville G.J."/>
            <person name="Davies J."/>
            <person name="Deadman R."/>
            <person name="Dunn M."/>
            <person name="Earthrowl M."/>
            <person name="Ellington A.G."/>
            <person name="Errington H."/>
            <person name="Frankish A."/>
            <person name="Frankland J."/>
            <person name="French L."/>
            <person name="Garner P."/>
            <person name="Garnett J."/>
            <person name="Gay L."/>
            <person name="Ghori M.R.J."/>
            <person name="Gibson R."/>
            <person name="Gilby L.M."/>
            <person name="Gillett W."/>
            <person name="Glithero R.J."/>
            <person name="Grafham D.V."/>
            <person name="Griffiths C."/>
            <person name="Griffiths-Jones S."/>
            <person name="Grocock R."/>
            <person name="Hammond S."/>
            <person name="Harrison E.S.I."/>
            <person name="Hart E."/>
            <person name="Haugen E."/>
            <person name="Heath P.D."/>
            <person name="Holmes S."/>
            <person name="Holt K."/>
            <person name="Howden P.J."/>
            <person name="Hunt A.R."/>
            <person name="Hunt S.E."/>
            <person name="Hunter G."/>
            <person name="Isherwood J."/>
            <person name="James R."/>
            <person name="Johnson C."/>
            <person name="Johnson D."/>
            <person name="Joy A."/>
            <person name="Kay M."/>
            <person name="Kershaw J.K."/>
            <person name="Kibukawa M."/>
            <person name="Kimberley A.M."/>
            <person name="King A."/>
            <person name="Knights A.J."/>
            <person name="Lad H."/>
            <person name="Laird G."/>
            <person name="Lawlor S."/>
            <person name="Leongamornlert D.A."/>
            <person name="Lloyd D.M."/>
            <person name="Loveland J."/>
            <person name="Lovell J."/>
            <person name="Lush M.J."/>
            <person name="Lyne R."/>
            <person name="Martin S."/>
            <person name="Mashreghi-Mohammadi M."/>
            <person name="Matthews L."/>
            <person name="Matthews N.S.W."/>
            <person name="McLaren S."/>
            <person name="Milne S."/>
            <person name="Mistry S."/>
            <person name="Moore M.J.F."/>
            <person name="Nickerson T."/>
            <person name="O'Dell C.N."/>
            <person name="Oliver K."/>
            <person name="Palmeiri A."/>
            <person name="Palmer S.A."/>
            <person name="Parker A."/>
            <person name="Patel D."/>
            <person name="Pearce A.V."/>
            <person name="Peck A.I."/>
            <person name="Pelan S."/>
            <person name="Phelps K."/>
            <person name="Phillimore B.J."/>
            <person name="Plumb R."/>
            <person name="Rajan J."/>
            <person name="Raymond C."/>
            <person name="Rouse G."/>
            <person name="Saenphimmachak C."/>
            <person name="Sehra H.K."/>
            <person name="Sheridan E."/>
            <person name="Shownkeen R."/>
            <person name="Sims S."/>
            <person name="Skuce C.D."/>
            <person name="Smith M."/>
            <person name="Steward C."/>
            <person name="Subramanian S."/>
            <person name="Sycamore N."/>
            <person name="Tracey A."/>
            <person name="Tromans A."/>
            <person name="Van Helmond Z."/>
            <person name="Wall M."/>
            <person name="Wallis J.M."/>
            <person name="White S."/>
            <person name="Whitehead S.L."/>
            <person name="Wilkinson J.E."/>
            <person name="Willey D.L."/>
            <person name="Williams H."/>
            <person name="Wilming L."/>
            <person name="Wray P.W."/>
            <person name="Wu Z."/>
            <person name="Coulson A."/>
            <person name="Vaudin M."/>
            <person name="Sulston J.E."/>
            <person name="Durbin R.M."/>
            <person name="Hubbard T."/>
            <person name="Wooster R."/>
            <person name="Dunham I."/>
            <person name="Carter N.P."/>
            <person name="McVean G."/>
            <person name="Ross M.T."/>
            <person name="Harrow J."/>
            <person name="Olson M.V."/>
            <person name="Beck S."/>
            <person name="Rogers J."/>
            <person name="Bentley D.R."/>
        </authorList>
    </citation>
    <scope>NUCLEOTIDE SEQUENCE [LARGE SCALE GENOMIC DNA]</scope>
</reference>
<reference key="5">
    <citation type="submission" date="2005-07" db="EMBL/GenBank/DDBJ databases">
        <authorList>
            <person name="Mural R.J."/>
            <person name="Istrail S."/>
            <person name="Sutton G.G."/>
            <person name="Florea L."/>
            <person name="Halpern A.L."/>
            <person name="Mobarry C.M."/>
            <person name="Lippert R."/>
            <person name="Walenz B."/>
            <person name="Shatkay H."/>
            <person name="Dew I."/>
            <person name="Miller J.R."/>
            <person name="Flanigan M.J."/>
            <person name="Edwards N.J."/>
            <person name="Bolanos R."/>
            <person name="Fasulo D."/>
            <person name="Halldorsson B.V."/>
            <person name="Hannenhalli S."/>
            <person name="Turner R."/>
            <person name="Yooseph S."/>
            <person name="Lu F."/>
            <person name="Nusskern D.R."/>
            <person name="Shue B.C."/>
            <person name="Zheng X.H."/>
            <person name="Zhong F."/>
            <person name="Delcher A.L."/>
            <person name="Huson D.H."/>
            <person name="Kravitz S.A."/>
            <person name="Mouchard L."/>
            <person name="Reinert K."/>
            <person name="Remington K.A."/>
            <person name="Clark A.G."/>
            <person name="Waterman M.S."/>
            <person name="Eichler E.E."/>
            <person name="Adams M.D."/>
            <person name="Hunkapiller M.W."/>
            <person name="Myers E.W."/>
            <person name="Venter J.C."/>
        </authorList>
    </citation>
    <scope>NUCLEOTIDE SEQUENCE [LARGE SCALE GENOMIC DNA]</scope>
</reference>
<reference key="6">
    <citation type="journal article" date="2004" name="Genome Res.">
        <title>The status, quality, and expansion of the NIH full-length cDNA project: the Mammalian Gene Collection (MGC).</title>
        <authorList>
            <consortium name="The MGC Project Team"/>
        </authorList>
    </citation>
    <scope>NUCLEOTIDE SEQUENCE [LARGE SCALE MRNA] (ISOFORMS 1; 2 AND 5)</scope>
</reference>
<gene>
    <name type="primary">RGSL1</name>
    <name type="synonym">RGSL</name>
    <name type="synonym">RGSL2</name>
</gene>
<feature type="chain" id="PRO_0000349305" description="Regulator of G-protein signaling protein-like">
    <location>
        <begin position="1"/>
        <end position="1076"/>
    </location>
</feature>
<feature type="transmembrane region" description="Helical" evidence="1">
    <location>
        <begin position="960"/>
        <end position="982"/>
    </location>
</feature>
<feature type="domain" description="RGS">
    <location>
        <begin position="645"/>
        <end position="764"/>
    </location>
</feature>
<feature type="region of interest" description="Disordered" evidence="2">
    <location>
        <begin position="834"/>
        <end position="854"/>
    </location>
</feature>
<feature type="compositionally biased region" description="Polar residues" evidence="2">
    <location>
        <begin position="834"/>
        <end position="852"/>
    </location>
</feature>
<feature type="splice variant" id="VSP_035347" description="In isoform 3 and isoform 4." evidence="4 6">
    <location>
        <begin position="1"/>
        <end position="576"/>
    </location>
</feature>
<feature type="splice variant" id="VSP_035348" description="In isoform 2 and isoform 5." evidence="5">
    <location>
        <begin position="1"/>
        <end position="477"/>
    </location>
</feature>
<feature type="splice variant" id="VSP_035349" description="In isoform 6." evidence="3">
    <original>G</original>
    <variation>GAKMMRWKKADQWLLQKCIGGVRGMWRFYSYLTGSA</variation>
    <location>
        <position position="100"/>
    </location>
</feature>
<feature type="splice variant" id="VSP_035350" description="In isoform 6." evidence="3">
    <original>TQNRFI</original>
    <variation>VGRTLG</variation>
    <location>
        <begin position="499"/>
        <end position="504"/>
    </location>
</feature>
<feature type="splice variant" id="VSP_035351" description="In isoform 6." evidence="3">
    <location>
        <begin position="505"/>
        <end position="1076"/>
    </location>
</feature>
<feature type="splice variant" id="VSP_035352" description="In isoform 5." evidence="5">
    <original>NVPEFQKDAILA</original>
    <variation>LFLEGNPLLLTV</variation>
    <location>
        <begin position="938"/>
        <end position="949"/>
    </location>
</feature>
<feature type="splice variant" id="VSP_035353" description="In isoform 5." evidence="5">
    <location>
        <begin position="950"/>
        <end position="1076"/>
    </location>
</feature>
<feature type="splice variant" id="VSP_035354" description="In isoform 4." evidence="4">
    <location>
        <begin position="979"/>
        <end position="1076"/>
    </location>
</feature>
<feature type="sequence variant" id="VAR_046356" description="In dbSNP:rs12083859.">
    <original>E</original>
    <variation>D</variation>
    <location>
        <position position="5"/>
    </location>
</feature>
<feature type="sequence variant" id="VAR_046357" description="In dbSNP:rs647224.">
    <original>W</original>
    <variation>C</variation>
    <location>
        <position position="256"/>
    </location>
</feature>
<feature type="sequence conflict" description="In Ref. 6; BC121032/BC121033." evidence="7" ref="6">
    <original>I</original>
    <variation>V</variation>
    <location>
        <position position="683"/>
    </location>
</feature>
<feature type="sequence conflict" description="In Ref. 6; BC121032." evidence="7" ref="6">
    <original>H</original>
    <variation>L</variation>
    <location>
        <position position="823"/>
    </location>
</feature>